<evidence type="ECO:0000255" key="1">
    <source>
        <dbReference type="HAMAP-Rule" id="MF_01359"/>
    </source>
</evidence>
<proteinExistence type="inferred from homology"/>
<feature type="chain" id="PRO_0000358706" description="NADH-quinone oxidoreductase subunit C/D">
    <location>
        <begin position="1"/>
        <end position="598"/>
    </location>
</feature>
<feature type="region of interest" description="NADH dehydrogenase I subunit C" evidence="1">
    <location>
        <begin position="1"/>
        <end position="189"/>
    </location>
</feature>
<feature type="region of interest" description="NADH dehydrogenase I subunit D" evidence="1">
    <location>
        <begin position="213"/>
        <end position="598"/>
    </location>
</feature>
<accession>A4TM34</accession>
<comment type="function">
    <text evidence="1">NDH-1 shuttles electrons from NADH, via FMN and iron-sulfur (Fe-S) centers, to quinones in the respiratory chain. The immediate electron acceptor for the enzyme in this species is believed to be ubiquinone. Couples the redox reaction to proton translocation (for every two electrons transferred, four hydrogen ions are translocated across the cytoplasmic membrane), and thus conserves the redox energy in a proton gradient.</text>
</comment>
<comment type="catalytic activity">
    <reaction evidence="1">
        <text>a quinone + NADH + 5 H(+)(in) = a quinol + NAD(+) + 4 H(+)(out)</text>
        <dbReference type="Rhea" id="RHEA:57888"/>
        <dbReference type="ChEBI" id="CHEBI:15378"/>
        <dbReference type="ChEBI" id="CHEBI:24646"/>
        <dbReference type="ChEBI" id="CHEBI:57540"/>
        <dbReference type="ChEBI" id="CHEBI:57945"/>
        <dbReference type="ChEBI" id="CHEBI:132124"/>
    </reaction>
</comment>
<comment type="subunit">
    <text evidence="1">NDH-1 is composed of 13 different subunits. Subunits NuoB, CD, E, F, and G constitute the peripheral sector of the complex.</text>
</comment>
<comment type="subcellular location">
    <subcellularLocation>
        <location evidence="1">Cell inner membrane</location>
        <topology evidence="1">Peripheral membrane protein</topology>
        <orientation evidence="1">Cytoplasmic side</orientation>
    </subcellularLocation>
</comment>
<comment type="similarity">
    <text evidence="1">In the N-terminal section; belongs to the complex I 30 kDa subunit family.</text>
</comment>
<comment type="similarity">
    <text evidence="1">In the C-terminal section; belongs to the complex I 49 kDa subunit family.</text>
</comment>
<dbReference type="EC" id="7.1.1.-" evidence="1"/>
<dbReference type="EMBL" id="CP000668">
    <property type="protein sequence ID" value="ABP40346.1"/>
    <property type="molecule type" value="Genomic_DNA"/>
</dbReference>
<dbReference type="RefSeq" id="WP_002210277.1">
    <property type="nucleotide sequence ID" value="NZ_CP009715.1"/>
</dbReference>
<dbReference type="SMR" id="A4TM34"/>
<dbReference type="GeneID" id="57976136"/>
<dbReference type="KEGG" id="ypp:YPDSF_1963"/>
<dbReference type="PATRIC" id="fig|386656.14.peg.3428"/>
<dbReference type="GO" id="GO:0030964">
    <property type="term" value="C:NADH dehydrogenase complex"/>
    <property type="evidence" value="ECO:0007669"/>
    <property type="project" value="InterPro"/>
</dbReference>
<dbReference type="GO" id="GO:0005886">
    <property type="term" value="C:plasma membrane"/>
    <property type="evidence" value="ECO:0007669"/>
    <property type="project" value="UniProtKB-SubCell"/>
</dbReference>
<dbReference type="GO" id="GO:0051287">
    <property type="term" value="F:NAD binding"/>
    <property type="evidence" value="ECO:0007669"/>
    <property type="project" value="InterPro"/>
</dbReference>
<dbReference type="GO" id="GO:0008137">
    <property type="term" value="F:NADH dehydrogenase (ubiquinone) activity"/>
    <property type="evidence" value="ECO:0007669"/>
    <property type="project" value="InterPro"/>
</dbReference>
<dbReference type="GO" id="GO:0050136">
    <property type="term" value="F:NADH:ubiquinone reductase (non-electrogenic) activity"/>
    <property type="evidence" value="ECO:0007669"/>
    <property type="project" value="UniProtKB-UniRule"/>
</dbReference>
<dbReference type="GO" id="GO:0048038">
    <property type="term" value="F:quinone binding"/>
    <property type="evidence" value="ECO:0007669"/>
    <property type="project" value="UniProtKB-KW"/>
</dbReference>
<dbReference type="FunFam" id="1.10.645.10:FF:000001">
    <property type="entry name" value="NADH-quinone oxidoreductase subunit C/D"/>
    <property type="match status" value="1"/>
</dbReference>
<dbReference type="FunFam" id="3.30.460.80:FF:000001">
    <property type="entry name" value="NADH-quinone oxidoreductase subunit C/D"/>
    <property type="match status" value="1"/>
</dbReference>
<dbReference type="Gene3D" id="1.10.645.10">
    <property type="entry name" value="Cytochrome-c3 Hydrogenase, chain B"/>
    <property type="match status" value="1"/>
</dbReference>
<dbReference type="Gene3D" id="3.30.460.80">
    <property type="entry name" value="NADH:ubiquinone oxidoreductase, 30kDa subunit"/>
    <property type="match status" value="1"/>
</dbReference>
<dbReference type="HAMAP" id="MF_01357">
    <property type="entry name" value="NDH1_NuoC"/>
    <property type="match status" value="1"/>
</dbReference>
<dbReference type="HAMAP" id="MF_01359">
    <property type="entry name" value="NDH1_NuoCD_1"/>
    <property type="match status" value="1"/>
</dbReference>
<dbReference type="HAMAP" id="MF_01358">
    <property type="entry name" value="NDH1_NuoD"/>
    <property type="match status" value="1"/>
</dbReference>
<dbReference type="InterPro" id="IPR010218">
    <property type="entry name" value="NADH_DH_suC"/>
</dbReference>
<dbReference type="InterPro" id="IPR023062">
    <property type="entry name" value="NADH_DH_suCD"/>
</dbReference>
<dbReference type="InterPro" id="IPR001135">
    <property type="entry name" value="NADH_Q_OxRdtase_suD"/>
</dbReference>
<dbReference type="InterPro" id="IPR037232">
    <property type="entry name" value="NADH_quin_OxRdtase_su_C/D-like"/>
</dbReference>
<dbReference type="InterPro" id="IPR001268">
    <property type="entry name" value="NADH_UbQ_OxRdtase_30kDa_su"/>
</dbReference>
<dbReference type="InterPro" id="IPR014029">
    <property type="entry name" value="NADH_UbQ_OxRdtase_49kDa_CS"/>
</dbReference>
<dbReference type="InterPro" id="IPR022885">
    <property type="entry name" value="NDH1_su_D/H"/>
</dbReference>
<dbReference type="InterPro" id="IPR029014">
    <property type="entry name" value="NiFe-Hase_large"/>
</dbReference>
<dbReference type="NCBIfam" id="TIGR01961">
    <property type="entry name" value="NuoC_fam"/>
    <property type="match status" value="1"/>
</dbReference>
<dbReference type="NCBIfam" id="TIGR01962">
    <property type="entry name" value="NuoD"/>
    <property type="match status" value="1"/>
</dbReference>
<dbReference type="NCBIfam" id="NF004739">
    <property type="entry name" value="PRK06075.1"/>
    <property type="match status" value="1"/>
</dbReference>
<dbReference type="NCBIfam" id="NF008728">
    <property type="entry name" value="PRK11742.1"/>
    <property type="match status" value="1"/>
</dbReference>
<dbReference type="PANTHER" id="PTHR11993:SF45">
    <property type="entry name" value="NADH-QUINONE OXIDOREDUCTASE SUBUNIT C_D"/>
    <property type="match status" value="1"/>
</dbReference>
<dbReference type="PANTHER" id="PTHR11993">
    <property type="entry name" value="NADH-UBIQUINONE OXIDOREDUCTASE 49 KDA SUBUNIT"/>
    <property type="match status" value="1"/>
</dbReference>
<dbReference type="Pfam" id="PF00329">
    <property type="entry name" value="Complex1_30kDa"/>
    <property type="match status" value="1"/>
</dbReference>
<dbReference type="Pfam" id="PF00346">
    <property type="entry name" value="Complex1_49kDa"/>
    <property type="match status" value="1"/>
</dbReference>
<dbReference type="SUPFAM" id="SSF56762">
    <property type="entry name" value="HydB/Nqo4-like"/>
    <property type="match status" value="1"/>
</dbReference>
<dbReference type="SUPFAM" id="SSF143243">
    <property type="entry name" value="Nqo5-like"/>
    <property type="match status" value="1"/>
</dbReference>
<dbReference type="PROSITE" id="PS00535">
    <property type="entry name" value="COMPLEX1_49K"/>
    <property type="match status" value="1"/>
</dbReference>
<protein>
    <recommendedName>
        <fullName evidence="1">NADH-quinone oxidoreductase subunit C/D</fullName>
        <ecNumber evidence="1">7.1.1.-</ecNumber>
    </recommendedName>
    <alternativeName>
        <fullName evidence="1">NADH dehydrogenase I subunit C/D</fullName>
    </alternativeName>
    <alternativeName>
        <fullName evidence="1">NDH-1 subunit C/D</fullName>
    </alternativeName>
</protein>
<sequence>MTDLTTSDSLQPAWQTRDHLDDPVIGELSNRFGPEAFVVQATRTGMPVVWVKREQLLEVMSFLRKQPKPYVMLFDLHGVDERLRTHRQGLPDADFSVFYHLLSIERNRDIMLKVALSEKDLHVSTATKIFPNANWYERETWEMFGITFDGHPHLTRIMMPQSWEGHPLRKDYPARATEFDPYVLTKQKEDLEMESLTFKPEDWGMKRGTENEDFMFLNLGPNHPSSHGAFRIVLQLDGEEIIDCVPDVGYHHRGAEKMGERQSWHSYIPYTDRIEYLGGCVNEMPYVLAVEKLAGIVVPDRVNTIRVMLSELFRINSHLLYISTFIQDVGAMTPVFFAFTDRQKVYDVIEAITGFRMHPAWFRIGGVAHDLPRGWERLLRDFLDWMPKRLDSYVKAALQNSILKGRSVGVAAYNAKEALEWGVTGAGLRATGVEFDVRKWRPYSGYENFDFEVPVGNNGDCYDRVMLKVEELRQSLRILEQCYKNMPEGPFKADHPLTTPPPKERTLQHIETLITHFLQVSWGPVMPANESFQMIEATKGINSYYLTSDGSTMSYRTRIRTPSYAHLQQIPSVIRGSLVSDLIVYLGSIDFVMSDVDR</sequence>
<keyword id="KW-0997">Cell inner membrane</keyword>
<keyword id="KW-1003">Cell membrane</keyword>
<keyword id="KW-0472">Membrane</keyword>
<keyword id="KW-0511">Multifunctional enzyme</keyword>
<keyword id="KW-0520">NAD</keyword>
<keyword id="KW-0874">Quinone</keyword>
<keyword id="KW-1278">Translocase</keyword>
<keyword id="KW-0813">Transport</keyword>
<keyword id="KW-0830">Ubiquinone</keyword>
<name>NUOCD_YERPP</name>
<gene>
    <name evidence="1" type="primary">nuoC</name>
    <name evidence="1" type="synonym">nuoCD</name>
    <name evidence="1" type="synonym">nuoD</name>
    <name type="ordered locus">YPDSF_1963</name>
</gene>
<reference key="1">
    <citation type="submission" date="2007-02" db="EMBL/GenBank/DDBJ databases">
        <title>Complete sequence of chromosome of Yersinia pestis Pestoides F.</title>
        <authorList>
            <consortium name="US DOE Joint Genome Institute"/>
            <person name="Copeland A."/>
            <person name="Lucas S."/>
            <person name="Lapidus A."/>
            <person name="Barry K."/>
            <person name="Detter J.C."/>
            <person name="Glavina del Rio T."/>
            <person name="Hammon N."/>
            <person name="Israni S."/>
            <person name="Dalin E."/>
            <person name="Tice H."/>
            <person name="Pitluck S."/>
            <person name="Di Bartolo G."/>
            <person name="Chain P."/>
            <person name="Malfatti S."/>
            <person name="Shin M."/>
            <person name="Vergez L."/>
            <person name="Schmutz J."/>
            <person name="Larimer F."/>
            <person name="Land M."/>
            <person name="Hauser L."/>
            <person name="Worsham P."/>
            <person name="Chu M."/>
            <person name="Bearden S."/>
            <person name="Garcia E."/>
            <person name="Richardson P."/>
        </authorList>
    </citation>
    <scope>NUCLEOTIDE SEQUENCE [LARGE SCALE GENOMIC DNA]</scope>
    <source>
        <strain>Pestoides F</strain>
    </source>
</reference>
<organism>
    <name type="scientific">Yersinia pestis (strain Pestoides F)</name>
    <dbReference type="NCBI Taxonomy" id="386656"/>
    <lineage>
        <taxon>Bacteria</taxon>
        <taxon>Pseudomonadati</taxon>
        <taxon>Pseudomonadota</taxon>
        <taxon>Gammaproteobacteria</taxon>
        <taxon>Enterobacterales</taxon>
        <taxon>Yersiniaceae</taxon>
        <taxon>Yersinia</taxon>
    </lineage>
</organism>